<gene>
    <name evidence="1" type="primary">lpxC</name>
    <name type="ordered locus">ECDH10B_0078</name>
</gene>
<accession>B1XC73</accession>
<protein>
    <recommendedName>
        <fullName evidence="1">UDP-3-O-acyl-N-acetylglucosamine deacetylase</fullName>
        <shortName evidence="1">UDP-3-O-acyl-GlcNAc deacetylase</shortName>
        <ecNumber evidence="1">3.5.1.108</ecNumber>
    </recommendedName>
    <alternativeName>
        <fullName evidence="1">UDP-3-O-[R-3-hydroxymyristoyl]-N-acetylglucosamine deacetylase</fullName>
    </alternativeName>
</protein>
<proteinExistence type="inferred from homology"/>
<organism>
    <name type="scientific">Escherichia coli (strain K12 / DH10B)</name>
    <dbReference type="NCBI Taxonomy" id="316385"/>
    <lineage>
        <taxon>Bacteria</taxon>
        <taxon>Pseudomonadati</taxon>
        <taxon>Pseudomonadota</taxon>
        <taxon>Gammaproteobacteria</taxon>
        <taxon>Enterobacterales</taxon>
        <taxon>Enterobacteriaceae</taxon>
        <taxon>Escherichia</taxon>
    </lineage>
</organism>
<feature type="chain" id="PRO_1000122783" description="UDP-3-O-acyl-N-acetylglucosamine deacetylase">
    <location>
        <begin position="1"/>
        <end position="305"/>
    </location>
</feature>
<feature type="active site" description="Proton donor" evidence="1">
    <location>
        <position position="265"/>
    </location>
</feature>
<feature type="binding site" evidence="1">
    <location>
        <position position="79"/>
    </location>
    <ligand>
        <name>Zn(2+)</name>
        <dbReference type="ChEBI" id="CHEBI:29105"/>
    </ligand>
</feature>
<feature type="binding site" evidence="1">
    <location>
        <position position="238"/>
    </location>
    <ligand>
        <name>Zn(2+)</name>
        <dbReference type="ChEBI" id="CHEBI:29105"/>
    </ligand>
</feature>
<feature type="binding site" evidence="1">
    <location>
        <position position="242"/>
    </location>
    <ligand>
        <name>Zn(2+)</name>
        <dbReference type="ChEBI" id="CHEBI:29105"/>
    </ligand>
</feature>
<keyword id="KW-0378">Hydrolase</keyword>
<keyword id="KW-0441">Lipid A biosynthesis</keyword>
<keyword id="KW-0444">Lipid biosynthesis</keyword>
<keyword id="KW-0443">Lipid metabolism</keyword>
<keyword id="KW-0479">Metal-binding</keyword>
<keyword id="KW-0862">Zinc</keyword>
<sequence length="305" mass="33956">MIKQRTLKRIVQATGVGLHTGKKVTLTLRPAPANTGVIYRRTDLNPPVDFPADAKSVRDTMLCTCLVNEHDVRISTVEHLNAALAGLGIDNIVIEVNAPEIPIMDGSAAPFVYLLLDAGIDELNCAKKFVRIKETVRVEDGDKWAEFKPYNGFSLDFTIDFNHPAIDSSNQRYAMNFSADAFMRQISRARTFGFMRDIEYLQSRGLCLGGSFDCAIVVDDYRVLNEDGLRFEDEFVRHKMLDAIGDLFMCGHNIIGAFTAYKSGHALNNKLLQAVLAKQEAWEYVTFQDDAELPLAFKAPSAVLA</sequence>
<comment type="function">
    <text evidence="1">Catalyzes the hydrolysis of UDP-3-O-myristoyl-N-acetylglucosamine to form UDP-3-O-myristoylglucosamine and acetate, the committed step in lipid A biosynthesis.</text>
</comment>
<comment type="catalytic activity">
    <reaction evidence="1">
        <text>a UDP-3-O-[(3R)-3-hydroxyacyl]-N-acetyl-alpha-D-glucosamine + H2O = a UDP-3-O-[(3R)-3-hydroxyacyl]-alpha-D-glucosamine + acetate</text>
        <dbReference type="Rhea" id="RHEA:67816"/>
        <dbReference type="ChEBI" id="CHEBI:15377"/>
        <dbReference type="ChEBI" id="CHEBI:30089"/>
        <dbReference type="ChEBI" id="CHEBI:137740"/>
        <dbReference type="ChEBI" id="CHEBI:173225"/>
        <dbReference type="EC" id="3.5.1.108"/>
    </reaction>
</comment>
<comment type="cofactor">
    <cofactor evidence="1">
        <name>Zn(2+)</name>
        <dbReference type="ChEBI" id="CHEBI:29105"/>
    </cofactor>
</comment>
<comment type="pathway">
    <text evidence="1">Glycolipid biosynthesis; lipid IV(A) biosynthesis; lipid IV(A) from (3R)-3-hydroxytetradecanoyl-[acyl-carrier-protein] and UDP-N-acetyl-alpha-D-glucosamine: step 2/6.</text>
</comment>
<comment type="similarity">
    <text evidence="1">Belongs to the LpxC family.</text>
</comment>
<name>LPXC_ECODH</name>
<reference key="1">
    <citation type="journal article" date="2008" name="J. Bacteriol.">
        <title>The complete genome sequence of Escherichia coli DH10B: insights into the biology of a laboratory workhorse.</title>
        <authorList>
            <person name="Durfee T."/>
            <person name="Nelson R."/>
            <person name="Baldwin S."/>
            <person name="Plunkett G. III"/>
            <person name="Burland V."/>
            <person name="Mau B."/>
            <person name="Petrosino J.F."/>
            <person name="Qin X."/>
            <person name="Muzny D.M."/>
            <person name="Ayele M."/>
            <person name="Gibbs R.A."/>
            <person name="Csorgo B."/>
            <person name="Posfai G."/>
            <person name="Weinstock G.M."/>
            <person name="Blattner F.R."/>
        </authorList>
    </citation>
    <scope>NUCLEOTIDE SEQUENCE [LARGE SCALE GENOMIC DNA]</scope>
    <source>
        <strain>K12 / DH10B</strain>
    </source>
</reference>
<dbReference type="EC" id="3.5.1.108" evidence="1"/>
<dbReference type="EMBL" id="CP000948">
    <property type="protein sequence ID" value="ACB01277.1"/>
    <property type="molecule type" value="Genomic_DNA"/>
</dbReference>
<dbReference type="RefSeq" id="WP_000595482.1">
    <property type="nucleotide sequence ID" value="NC_010473.1"/>
</dbReference>
<dbReference type="SMR" id="B1XC73"/>
<dbReference type="GeneID" id="93777338"/>
<dbReference type="KEGG" id="ecd:ECDH10B_0078"/>
<dbReference type="HOGENOM" id="CLU_046528_1_0_6"/>
<dbReference type="UniPathway" id="UPA00359">
    <property type="reaction ID" value="UER00478"/>
</dbReference>
<dbReference type="GO" id="GO:0016020">
    <property type="term" value="C:membrane"/>
    <property type="evidence" value="ECO:0007669"/>
    <property type="project" value="GOC"/>
</dbReference>
<dbReference type="GO" id="GO:0046872">
    <property type="term" value="F:metal ion binding"/>
    <property type="evidence" value="ECO:0007669"/>
    <property type="project" value="UniProtKB-KW"/>
</dbReference>
<dbReference type="GO" id="GO:0103117">
    <property type="term" value="F:UDP-3-O-acyl-N-acetylglucosamine deacetylase activity"/>
    <property type="evidence" value="ECO:0007669"/>
    <property type="project" value="UniProtKB-UniRule"/>
</dbReference>
<dbReference type="GO" id="GO:0009245">
    <property type="term" value="P:lipid A biosynthetic process"/>
    <property type="evidence" value="ECO:0007669"/>
    <property type="project" value="UniProtKB-UniRule"/>
</dbReference>
<dbReference type="FunFam" id="3.30.1700.10:FF:000001">
    <property type="entry name" value="UDP-3-O-acyl-N-acetylglucosamine deacetylase"/>
    <property type="match status" value="1"/>
</dbReference>
<dbReference type="FunFam" id="3.30.230.20:FF:000001">
    <property type="entry name" value="UDP-3-O-acyl-N-acetylglucosamine deacetylase"/>
    <property type="match status" value="1"/>
</dbReference>
<dbReference type="Gene3D" id="3.30.230.20">
    <property type="entry name" value="lpxc deacetylase, domain 1"/>
    <property type="match status" value="1"/>
</dbReference>
<dbReference type="Gene3D" id="3.30.1700.10">
    <property type="entry name" value="lpxc deacetylase, domain 2"/>
    <property type="match status" value="1"/>
</dbReference>
<dbReference type="HAMAP" id="MF_00388">
    <property type="entry name" value="LpxC"/>
    <property type="match status" value="1"/>
</dbReference>
<dbReference type="InterPro" id="IPR020568">
    <property type="entry name" value="Ribosomal_Su5_D2-typ_SF"/>
</dbReference>
<dbReference type="InterPro" id="IPR004463">
    <property type="entry name" value="UDP-acyl_GlcNac_deAcase"/>
</dbReference>
<dbReference type="InterPro" id="IPR011334">
    <property type="entry name" value="UDP-acyl_GlcNac_deAcase_C"/>
</dbReference>
<dbReference type="InterPro" id="IPR015870">
    <property type="entry name" value="UDP-acyl_N-AcGlcN_deAcase_N"/>
</dbReference>
<dbReference type="NCBIfam" id="TIGR00325">
    <property type="entry name" value="lpxC"/>
    <property type="match status" value="1"/>
</dbReference>
<dbReference type="PANTHER" id="PTHR33694">
    <property type="entry name" value="UDP-3-O-ACYL-N-ACETYLGLUCOSAMINE DEACETYLASE 1, MITOCHONDRIAL-RELATED"/>
    <property type="match status" value="1"/>
</dbReference>
<dbReference type="PANTHER" id="PTHR33694:SF1">
    <property type="entry name" value="UDP-3-O-ACYL-N-ACETYLGLUCOSAMINE DEACETYLASE 1, MITOCHONDRIAL-RELATED"/>
    <property type="match status" value="1"/>
</dbReference>
<dbReference type="Pfam" id="PF03331">
    <property type="entry name" value="LpxC"/>
    <property type="match status" value="1"/>
</dbReference>
<dbReference type="SUPFAM" id="SSF54211">
    <property type="entry name" value="Ribosomal protein S5 domain 2-like"/>
    <property type="match status" value="2"/>
</dbReference>
<evidence type="ECO:0000255" key="1">
    <source>
        <dbReference type="HAMAP-Rule" id="MF_00388"/>
    </source>
</evidence>